<comment type="function">
    <text evidence="1">Functions as a component of the transcription regulatory histone acetylation (HAT) complex SAGA. At the promoters, SAGA is required for recruitment of the basal transcription machinery. It influences RNA polymerase II transcriptional activity through different activities such as TBP interaction and promoter selectivity, interaction with transcription activators, and chromatin modification through histone acetylation and deubiquitination. SAGA acetylates nucleosomal histone H3 to some extent (to form H3K9ac, H3K14ac, H3K18ac and H3K23ac). SAGA interacts with DNA via upstream activating sequences (UASs). Involved in transcriptional regulation of a subset of SAGA-regulated genes. Within the SAGA complex, participates in a subcomplex, that specifically deubiquitinates histones H2B.</text>
</comment>
<comment type="subunit">
    <text evidence="1">Component of the 1.8 MDa SAGA transcription coactivator-HAT complex. SAGA is built of 5 distinct domains with specialized functions. Within the SAGA complex, SUS1, SGF11, SGF73 and UBP8 form an additional subcomplex of SAGA called the DUB module (deubiquitination module). Interacts directly with SGF73, SUS1 and UBP8.</text>
</comment>
<comment type="subcellular location">
    <subcellularLocation>
        <location evidence="1">Nucleus</location>
    </subcellularLocation>
</comment>
<comment type="domain">
    <text evidence="1">The long N-terminal helix forms part of the 'assembly lobe' of the SAGA deubiquitination module.</text>
</comment>
<comment type="domain">
    <text evidence="1">The C-terminal SGF11-type zinc-finger domain together with the C-terminal catalytic domain of UBP8 forms the 'catalytic lobe' of the SAGA deubiquitination module.</text>
</comment>
<comment type="similarity">
    <text evidence="1">Belongs to the SGF11 family.</text>
</comment>
<name>SGF11_LODEL</name>
<dbReference type="EMBL" id="CH981526">
    <property type="protein sequence ID" value="EDK44593.1"/>
    <property type="molecule type" value="Genomic_DNA"/>
</dbReference>
<dbReference type="RefSeq" id="XP_001526214.1">
    <property type="nucleotide sequence ID" value="XM_001526164.1"/>
</dbReference>
<dbReference type="SMR" id="A5DZI5"/>
<dbReference type="STRING" id="379508.A5DZI5"/>
<dbReference type="GeneID" id="5233317"/>
<dbReference type="KEGG" id="lel:PVL30_003616"/>
<dbReference type="VEuPathDB" id="FungiDB:LELG_02772"/>
<dbReference type="eggNOG" id="ENOG502SG7T">
    <property type="taxonomic scope" value="Eukaryota"/>
</dbReference>
<dbReference type="HOGENOM" id="CLU_130538_0_0_1"/>
<dbReference type="InParanoid" id="A5DZI5"/>
<dbReference type="OMA" id="RYFSCEN"/>
<dbReference type="OrthoDB" id="21557at2759"/>
<dbReference type="Proteomes" id="UP000001996">
    <property type="component" value="Unassembled WGS sequence"/>
</dbReference>
<dbReference type="GO" id="GO:0071819">
    <property type="term" value="C:DUBm complex"/>
    <property type="evidence" value="ECO:0007669"/>
    <property type="project" value="UniProtKB-UniRule"/>
</dbReference>
<dbReference type="GO" id="GO:0000124">
    <property type="term" value="C:SAGA complex"/>
    <property type="evidence" value="ECO:0007669"/>
    <property type="project" value="UniProtKB-UniRule"/>
</dbReference>
<dbReference type="GO" id="GO:0003713">
    <property type="term" value="F:transcription coactivator activity"/>
    <property type="evidence" value="ECO:0007669"/>
    <property type="project" value="UniProtKB-UniRule"/>
</dbReference>
<dbReference type="GO" id="GO:0008270">
    <property type="term" value="F:zinc ion binding"/>
    <property type="evidence" value="ECO:0007669"/>
    <property type="project" value="UniProtKB-UniRule"/>
</dbReference>
<dbReference type="GO" id="GO:0006325">
    <property type="term" value="P:chromatin organization"/>
    <property type="evidence" value="ECO:0007669"/>
    <property type="project" value="UniProtKB-KW"/>
</dbReference>
<dbReference type="Gene3D" id="3.30.160.60">
    <property type="entry name" value="Classic Zinc Finger"/>
    <property type="match status" value="1"/>
</dbReference>
<dbReference type="HAMAP" id="MF_03047">
    <property type="entry name" value="Sgf11"/>
    <property type="match status" value="1"/>
</dbReference>
<dbReference type="InterPro" id="IPR013246">
    <property type="entry name" value="SAGA_su_Sgf11"/>
</dbReference>
<dbReference type="Pfam" id="PF08209">
    <property type="entry name" value="Sgf11"/>
    <property type="match status" value="1"/>
</dbReference>
<accession>A5DZI5</accession>
<evidence type="ECO:0000255" key="1">
    <source>
        <dbReference type="HAMAP-Rule" id="MF_03047"/>
    </source>
</evidence>
<sequence>MINNIIRNQVVTHFADHACMAQATVSIPELDKLATNLQLADTNKDIFGQDRSKLKGIEASRYFSCDNCGRKIAGGRFAQHINKCLDRKRK</sequence>
<keyword id="KW-0010">Activator</keyword>
<keyword id="KW-0156">Chromatin regulator</keyword>
<keyword id="KW-0479">Metal-binding</keyword>
<keyword id="KW-0539">Nucleus</keyword>
<keyword id="KW-1185">Reference proteome</keyword>
<keyword id="KW-0804">Transcription</keyword>
<keyword id="KW-0805">Transcription regulation</keyword>
<keyword id="KW-0862">Zinc</keyword>
<keyword id="KW-0863">Zinc-finger</keyword>
<proteinExistence type="inferred from homology"/>
<organism>
    <name type="scientific">Lodderomyces elongisporus (strain ATCC 11503 / CBS 2605 / JCM 1781 / NBRC 1676 / NRRL YB-4239)</name>
    <name type="common">Yeast</name>
    <name type="synonym">Saccharomyces elongisporus</name>
    <dbReference type="NCBI Taxonomy" id="379508"/>
    <lineage>
        <taxon>Eukaryota</taxon>
        <taxon>Fungi</taxon>
        <taxon>Dikarya</taxon>
        <taxon>Ascomycota</taxon>
        <taxon>Saccharomycotina</taxon>
        <taxon>Pichiomycetes</taxon>
        <taxon>Debaryomycetaceae</taxon>
        <taxon>Candida/Lodderomyces clade</taxon>
        <taxon>Lodderomyces</taxon>
    </lineage>
</organism>
<feature type="chain" id="PRO_0000367541" description="SAGA-associated factor 11">
    <location>
        <begin position="1"/>
        <end position="90"/>
    </location>
</feature>
<feature type="zinc finger region" description="SGF11-type" evidence="1">
    <location>
        <begin position="63"/>
        <end position="84"/>
    </location>
</feature>
<reference key="1">
    <citation type="journal article" date="2009" name="Nature">
        <title>Evolution of pathogenicity and sexual reproduction in eight Candida genomes.</title>
        <authorList>
            <person name="Butler G."/>
            <person name="Rasmussen M.D."/>
            <person name="Lin M.F."/>
            <person name="Santos M.A.S."/>
            <person name="Sakthikumar S."/>
            <person name="Munro C.A."/>
            <person name="Rheinbay E."/>
            <person name="Grabherr M."/>
            <person name="Forche A."/>
            <person name="Reedy J.L."/>
            <person name="Agrafioti I."/>
            <person name="Arnaud M.B."/>
            <person name="Bates S."/>
            <person name="Brown A.J.P."/>
            <person name="Brunke S."/>
            <person name="Costanzo M.C."/>
            <person name="Fitzpatrick D.A."/>
            <person name="de Groot P.W.J."/>
            <person name="Harris D."/>
            <person name="Hoyer L.L."/>
            <person name="Hube B."/>
            <person name="Klis F.M."/>
            <person name="Kodira C."/>
            <person name="Lennard N."/>
            <person name="Logue M.E."/>
            <person name="Martin R."/>
            <person name="Neiman A.M."/>
            <person name="Nikolaou E."/>
            <person name="Quail M.A."/>
            <person name="Quinn J."/>
            <person name="Santos M.C."/>
            <person name="Schmitzberger F.F."/>
            <person name="Sherlock G."/>
            <person name="Shah P."/>
            <person name="Silverstein K.A.T."/>
            <person name="Skrzypek M.S."/>
            <person name="Soll D."/>
            <person name="Staggs R."/>
            <person name="Stansfield I."/>
            <person name="Stumpf M.P.H."/>
            <person name="Sudbery P.E."/>
            <person name="Srikantha T."/>
            <person name="Zeng Q."/>
            <person name="Berman J."/>
            <person name="Berriman M."/>
            <person name="Heitman J."/>
            <person name="Gow N.A.R."/>
            <person name="Lorenz M.C."/>
            <person name="Birren B.W."/>
            <person name="Kellis M."/>
            <person name="Cuomo C.A."/>
        </authorList>
    </citation>
    <scope>NUCLEOTIDE SEQUENCE [LARGE SCALE GENOMIC DNA]</scope>
    <source>
        <strain>ATCC 11503 / BCRC 21390 / CBS 2605 / JCM 1781 / NBRC 1676 / NRRL YB-4239</strain>
    </source>
</reference>
<protein>
    <recommendedName>
        <fullName evidence="1">SAGA-associated factor 11</fullName>
    </recommendedName>
</protein>
<gene>
    <name evidence="1" type="primary">SGF11</name>
    <name type="ORF">LELG_02772</name>
</gene>